<gene>
    <name evidence="1" type="primary">CIAPIN1</name>
    <name evidence="1" type="synonym">l(2)35Bg</name>
    <name type="ORF">GE19419</name>
</gene>
<reference key="1">
    <citation type="journal article" date="2007" name="Nature">
        <title>Evolution of genes and genomes on the Drosophila phylogeny.</title>
        <authorList>
            <consortium name="Drosophila 12 genomes consortium"/>
        </authorList>
    </citation>
    <scope>NUCLEOTIDE SEQUENCE [LARGE SCALE GENOMIC DNA]</scope>
    <source>
        <strain>Tai18E2 / Tucson 14021-0261.01</strain>
    </source>
</reference>
<feature type="chain" id="PRO_0000392325" description="Anamorsin homolog">
    <location>
        <begin position="1"/>
        <end position="248"/>
    </location>
</feature>
<feature type="region of interest" description="N-terminal SAM-like domain" evidence="1">
    <location>
        <begin position="4"/>
        <end position="129"/>
    </location>
</feature>
<feature type="region of interest" description="Linker" evidence="1">
    <location>
        <begin position="130"/>
        <end position="161"/>
    </location>
</feature>
<feature type="region of interest" description="Fe-S binding site A" evidence="1">
    <location>
        <begin position="172"/>
        <end position="186"/>
    </location>
</feature>
<feature type="region of interest" description="Fe-S binding site B" evidence="1">
    <location>
        <begin position="209"/>
        <end position="223"/>
    </location>
</feature>
<feature type="short sequence motif" description="Cx2C motif 1" evidence="1">
    <location>
        <begin position="209"/>
        <end position="212"/>
    </location>
</feature>
<feature type="short sequence motif" description="Cx2C motif 2" evidence="1">
    <location>
        <begin position="220"/>
        <end position="223"/>
    </location>
</feature>
<feature type="binding site" evidence="1">
    <location>
        <position position="172"/>
    </location>
    <ligand>
        <name>[2Fe-2S] cluster</name>
        <dbReference type="ChEBI" id="CHEBI:190135"/>
    </ligand>
</feature>
<feature type="binding site" evidence="1">
    <location>
        <position position="181"/>
    </location>
    <ligand>
        <name>[2Fe-2S] cluster</name>
        <dbReference type="ChEBI" id="CHEBI:190135"/>
    </ligand>
</feature>
<feature type="binding site" evidence="1">
    <location>
        <position position="184"/>
    </location>
    <ligand>
        <name>[2Fe-2S] cluster</name>
        <dbReference type="ChEBI" id="CHEBI:190135"/>
    </ligand>
</feature>
<feature type="binding site" evidence="1">
    <location>
        <position position="186"/>
    </location>
    <ligand>
        <name>[2Fe-2S] cluster</name>
        <dbReference type="ChEBI" id="CHEBI:190135"/>
    </ligand>
</feature>
<feature type="binding site" evidence="1">
    <location>
        <position position="209"/>
    </location>
    <ligand>
        <name>[4Fe-4S] cluster</name>
        <dbReference type="ChEBI" id="CHEBI:49883"/>
    </ligand>
</feature>
<feature type="binding site" evidence="1">
    <location>
        <position position="212"/>
    </location>
    <ligand>
        <name>[4Fe-4S] cluster</name>
        <dbReference type="ChEBI" id="CHEBI:49883"/>
    </ligand>
</feature>
<feature type="binding site" evidence="1">
    <location>
        <position position="220"/>
    </location>
    <ligand>
        <name>[4Fe-4S] cluster</name>
        <dbReference type="ChEBI" id="CHEBI:49883"/>
    </ligand>
</feature>
<feature type="binding site" evidence="1">
    <location>
        <position position="223"/>
    </location>
    <ligand>
        <name>[4Fe-4S] cluster</name>
        <dbReference type="ChEBI" id="CHEBI:49883"/>
    </ligand>
</feature>
<sequence>MENFKGLQKSLYIWTDSADLDKRVQQLKSATGGDVALENVHRLSFSSYANSSFDLIVIECAQLTDSYVKLLHMLKPSGKLHLVSFIGPAASLLQEIKLSGFINCREDSPDALTAEKPGYETGSSARLSFAKKNASAVNVWKISGDDEELIDEEELLDEEDKQKPDPAGLRVCSTTGKRKACKNCSCGLAEELETEKQSQKANETAKSSCGNCYLGDAFRCSTCPYLGMPAFKPGEKVQLGDNLLKSDI</sequence>
<name>DRE2_DROYA</name>
<protein>
    <recommendedName>
        <fullName evidence="1">Anamorsin homolog</fullName>
    </recommendedName>
    <alternativeName>
        <fullName evidence="1">Fe-S cluster assembly protein DRE2 homolog</fullName>
    </alternativeName>
</protein>
<keyword id="KW-0001">2Fe-2S</keyword>
<keyword id="KW-0004">4Fe-4S</keyword>
<keyword id="KW-0963">Cytoplasm</keyword>
<keyword id="KW-0408">Iron</keyword>
<keyword id="KW-0411">Iron-sulfur</keyword>
<keyword id="KW-0479">Metal-binding</keyword>
<keyword id="KW-0496">Mitochondrion</keyword>
<accession>B4NYT3</accession>
<evidence type="ECO:0000255" key="1">
    <source>
        <dbReference type="HAMAP-Rule" id="MF_03115"/>
    </source>
</evidence>
<organism>
    <name type="scientific">Drosophila yakuba</name>
    <name type="common">Fruit fly</name>
    <dbReference type="NCBI Taxonomy" id="7245"/>
    <lineage>
        <taxon>Eukaryota</taxon>
        <taxon>Metazoa</taxon>
        <taxon>Ecdysozoa</taxon>
        <taxon>Arthropoda</taxon>
        <taxon>Hexapoda</taxon>
        <taxon>Insecta</taxon>
        <taxon>Pterygota</taxon>
        <taxon>Neoptera</taxon>
        <taxon>Endopterygota</taxon>
        <taxon>Diptera</taxon>
        <taxon>Brachycera</taxon>
        <taxon>Muscomorpha</taxon>
        <taxon>Ephydroidea</taxon>
        <taxon>Drosophilidae</taxon>
        <taxon>Drosophila</taxon>
        <taxon>Sophophora</taxon>
    </lineage>
</organism>
<comment type="function">
    <text evidence="1">Component of the cytosolic iron-sulfur (Fe-S) protein assembly (CIA) machinery. Required for the maturation of extramitochondrial Fe-S proteins. Part of an electron transfer chain functioning in an early step of cytosolic Fe-S biogenesis, facilitating the de novo assembly of a [4Fe-4S] cluster on the cytosolic Fe-S scaffold complex. Electrons are transferred from NADPH via a FAD- and FMN-containing diflavin oxidoreductase. Together with the diflavin oxidoreductase, also required for the assembly of the diferric tyrosyl radical cofactor of ribonucleotide reductase (RNR), probably by providing electrons for reduction during radical cofactor maturation in the catalytic small subunit.</text>
</comment>
<comment type="cofactor">
    <cofactor evidence="1">
        <name>[2Fe-2S] cluster</name>
        <dbReference type="ChEBI" id="CHEBI:190135"/>
    </cofactor>
</comment>
<comment type="cofactor">
    <cofactor evidence="1">
        <name>[4Fe-4S] cluster</name>
        <dbReference type="ChEBI" id="CHEBI:49883"/>
    </cofactor>
</comment>
<comment type="subunit">
    <text evidence="1">Monomer.</text>
</comment>
<comment type="subcellular location">
    <subcellularLocation>
        <location evidence="1">Cytoplasm</location>
    </subcellularLocation>
    <subcellularLocation>
        <location evidence="1">Mitochondrion intermembrane space</location>
    </subcellularLocation>
</comment>
<comment type="domain">
    <text evidence="1">The C-terminal domain binds 2 Fe-S clusters but is otherwise mostly in an intrinsically disordered conformation.</text>
</comment>
<comment type="domain">
    <text evidence="1">The N-terminal domain has structural similarity with S-adenosyl-L-methionine-dependent methyltransferases, but does not bind S-adenosyl-L-methionine. It is required for correct assembly of the 2 Fe-S clusters.</text>
</comment>
<comment type="domain">
    <text evidence="1">The twin Cx2C motifs are involved in the recognition by the mitochondrial MIA40-ERV1 disulfide relay system. The formation of 2 disulfide bonds in the Cx2C motifs through dithiol/disulfide exchange reactions effectively traps the protein in the mitochondrial intermembrane space.</text>
</comment>
<comment type="similarity">
    <text evidence="1">Belongs to the anamorsin family.</text>
</comment>
<proteinExistence type="inferred from homology"/>
<dbReference type="EMBL" id="CM000157">
    <property type="protein sequence ID" value="EDW89784.1"/>
    <property type="molecule type" value="Genomic_DNA"/>
</dbReference>
<dbReference type="EnsemblMetazoa" id="FBtr0265937">
    <property type="protein sequence ID" value="FBpp0264429"/>
    <property type="gene ID" value="FBgn0236762"/>
</dbReference>
<dbReference type="EnsemblMetazoa" id="XM_002090036.4">
    <property type="protein sequence ID" value="XP_002090072.1"/>
    <property type="gene ID" value="LOC6529041"/>
</dbReference>
<dbReference type="GeneID" id="6529041"/>
<dbReference type="KEGG" id="dya:Dyak_GE19419"/>
<dbReference type="CTD" id="57019"/>
<dbReference type="eggNOG" id="KOG4020">
    <property type="taxonomic scope" value="Eukaryota"/>
</dbReference>
<dbReference type="HOGENOM" id="CLU_064393_1_0_1"/>
<dbReference type="OMA" id="GFINCRE"/>
<dbReference type="OrthoDB" id="311633at2759"/>
<dbReference type="PhylomeDB" id="B4NYT3"/>
<dbReference type="Proteomes" id="UP000002282">
    <property type="component" value="Chromosome 2L"/>
</dbReference>
<dbReference type="GO" id="GO:0005758">
    <property type="term" value="C:mitochondrial intermembrane space"/>
    <property type="evidence" value="ECO:0007669"/>
    <property type="project" value="UniProtKB-SubCell"/>
</dbReference>
<dbReference type="GO" id="GO:0051537">
    <property type="term" value="F:2 iron, 2 sulfur cluster binding"/>
    <property type="evidence" value="ECO:0007669"/>
    <property type="project" value="UniProtKB-UniRule"/>
</dbReference>
<dbReference type="GO" id="GO:0051539">
    <property type="term" value="F:4 iron, 4 sulfur cluster binding"/>
    <property type="evidence" value="ECO:0007669"/>
    <property type="project" value="UniProtKB-KW"/>
</dbReference>
<dbReference type="GO" id="GO:0009055">
    <property type="term" value="F:electron transfer activity"/>
    <property type="evidence" value="ECO:0007669"/>
    <property type="project" value="UniProtKB-UniRule"/>
</dbReference>
<dbReference type="GO" id="GO:0046872">
    <property type="term" value="F:metal ion binding"/>
    <property type="evidence" value="ECO:0007669"/>
    <property type="project" value="UniProtKB-KW"/>
</dbReference>
<dbReference type="GO" id="GO:0016226">
    <property type="term" value="P:iron-sulfur cluster assembly"/>
    <property type="evidence" value="ECO:0007669"/>
    <property type="project" value="UniProtKB-UniRule"/>
</dbReference>
<dbReference type="FunFam" id="3.40.50.150:FF:000545">
    <property type="entry name" value="Anamorsin homolog"/>
    <property type="match status" value="1"/>
</dbReference>
<dbReference type="Gene3D" id="3.40.50.150">
    <property type="entry name" value="Vaccinia Virus protein VP39"/>
    <property type="match status" value="1"/>
</dbReference>
<dbReference type="HAMAP" id="MF_03115">
    <property type="entry name" value="Anamorsin"/>
    <property type="match status" value="1"/>
</dbReference>
<dbReference type="InterPro" id="IPR007785">
    <property type="entry name" value="Anamorsin"/>
</dbReference>
<dbReference type="InterPro" id="IPR049011">
    <property type="entry name" value="Anamorsin_N_metazoan"/>
</dbReference>
<dbReference type="InterPro" id="IPR046408">
    <property type="entry name" value="CIAPIN1"/>
</dbReference>
<dbReference type="InterPro" id="IPR029063">
    <property type="entry name" value="SAM-dependent_MTases_sf"/>
</dbReference>
<dbReference type="PANTHER" id="PTHR13273">
    <property type="entry name" value="ANAMORSIN"/>
    <property type="match status" value="1"/>
</dbReference>
<dbReference type="PANTHER" id="PTHR13273:SF14">
    <property type="entry name" value="ANAMORSIN"/>
    <property type="match status" value="1"/>
</dbReference>
<dbReference type="Pfam" id="PF20922">
    <property type="entry name" value="Anamorsin_N"/>
    <property type="match status" value="1"/>
</dbReference>
<dbReference type="Pfam" id="PF05093">
    <property type="entry name" value="CIAPIN1"/>
    <property type="match status" value="2"/>
</dbReference>